<feature type="chain" id="PRO_0000251390" description="Large ribosomal subunit protein uL18">
    <location>
        <begin position="1"/>
        <end position="117"/>
    </location>
</feature>
<evidence type="ECO:0000255" key="1">
    <source>
        <dbReference type="HAMAP-Rule" id="MF_01337"/>
    </source>
</evidence>
<evidence type="ECO:0000305" key="2"/>
<proteinExistence type="inferred from homology"/>
<organism>
    <name type="scientific">Hydrogenovibrio crunogenus (strain DSM 25203 / XCL-2)</name>
    <name type="common">Thiomicrospira crunogena</name>
    <dbReference type="NCBI Taxonomy" id="317025"/>
    <lineage>
        <taxon>Bacteria</taxon>
        <taxon>Pseudomonadati</taxon>
        <taxon>Pseudomonadota</taxon>
        <taxon>Gammaproteobacteria</taxon>
        <taxon>Thiotrichales</taxon>
        <taxon>Piscirickettsiaceae</taxon>
        <taxon>Hydrogenovibrio</taxon>
    </lineage>
</organism>
<accession>Q31IW6</accession>
<protein>
    <recommendedName>
        <fullName evidence="1">Large ribosomal subunit protein uL18</fullName>
    </recommendedName>
    <alternativeName>
        <fullName evidence="2">50S ribosomal protein L18</fullName>
    </alternativeName>
</protein>
<name>RL18_HYDCU</name>
<sequence>MDKKATRLRRAKKTRAKLGSQDRARLCVHRTPKHIYAQIISSDGSSVVASCSTVQADIKKQVAFGGNKEAAELVGKSIAEKAKAAGIESVAFDRSGFKYHGRVQVLADSARENGLQF</sequence>
<keyword id="KW-0687">Ribonucleoprotein</keyword>
<keyword id="KW-0689">Ribosomal protein</keyword>
<keyword id="KW-0694">RNA-binding</keyword>
<keyword id="KW-0699">rRNA-binding</keyword>
<reference key="1">
    <citation type="journal article" date="2006" name="PLoS Biol.">
        <title>The genome of deep-sea vent chemolithoautotroph Thiomicrospira crunogena XCL-2.</title>
        <authorList>
            <person name="Scott K.M."/>
            <person name="Sievert S.M."/>
            <person name="Abril F.N."/>
            <person name="Ball L.A."/>
            <person name="Barrett C.J."/>
            <person name="Blake R.A."/>
            <person name="Boller A.J."/>
            <person name="Chain P.S.G."/>
            <person name="Clark J.A."/>
            <person name="Davis C.R."/>
            <person name="Detter C."/>
            <person name="Do K.F."/>
            <person name="Dobrinski K.P."/>
            <person name="Faza B.I."/>
            <person name="Fitzpatrick K.A."/>
            <person name="Freyermuth S.K."/>
            <person name="Harmer T.L."/>
            <person name="Hauser L.J."/>
            <person name="Huegler M."/>
            <person name="Kerfeld C.A."/>
            <person name="Klotz M.G."/>
            <person name="Kong W.W."/>
            <person name="Land M."/>
            <person name="Lapidus A."/>
            <person name="Larimer F.W."/>
            <person name="Longo D.L."/>
            <person name="Lucas S."/>
            <person name="Malfatti S.A."/>
            <person name="Massey S.E."/>
            <person name="Martin D.D."/>
            <person name="McCuddin Z."/>
            <person name="Meyer F."/>
            <person name="Moore J.L."/>
            <person name="Ocampo L.H. Jr."/>
            <person name="Paul J.H."/>
            <person name="Paulsen I.T."/>
            <person name="Reep D.K."/>
            <person name="Ren Q."/>
            <person name="Ross R.L."/>
            <person name="Sato P.Y."/>
            <person name="Thomas P."/>
            <person name="Tinkham L.E."/>
            <person name="Zeruth G.T."/>
        </authorList>
    </citation>
    <scope>NUCLEOTIDE SEQUENCE [LARGE SCALE GENOMIC DNA]</scope>
    <source>
        <strain>DSM 25203 / XCL-2</strain>
    </source>
</reference>
<comment type="function">
    <text evidence="1">This is one of the proteins that bind and probably mediate the attachment of the 5S RNA into the large ribosomal subunit, where it forms part of the central protuberance.</text>
</comment>
<comment type="subunit">
    <text evidence="1">Part of the 50S ribosomal subunit; part of the 5S rRNA/L5/L18/L25 subcomplex. Contacts the 5S and 23S rRNAs.</text>
</comment>
<comment type="similarity">
    <text evidence="1">Belongs to the universal ribosomal protein uL18 family.</text>
</comment>
<gene>
    <name evidence="1" type="primary">rplR</name>
    <name type="ordered locus">Tcr_0311</name>
</gene>
<dbReference type="EMBL" id="CP000109">
    <property type="protein sequence ID" value="ABB40907.1"/>
    <property type="molecule type" value="Genomic_DNA"/>
</dbReference>
<dbReference type="SMR" id="Q31IW6"/>
<dbReference type="STRING" id="317025.Tcr_0311"/>
<dbReference type="KEGG" id="tcx:Tcr_0311"/>
<dbReference type="eggNOG" id="COG0256">
    <property type="taxonomic scope" value="Bacteria"/>
</dbReference>
<dbReference type="HOGENOM" id="CLU_098841_0_1_6"/>
<dbReference type="OrthoDB" id="9810939at2"/>
<dbReference type="GO" id="GO:0022625">
    <property type="term" value="C:cytosolic large ribosomal subunit"/>
    <property type="evidence" value="ECO:0007669"/>
    <property type="project" value="TreeGrafter"/>
</dbReference>
<dbReference type="GO" id="GO:0008097">
    <property type="term" value="F:5S rRNA binding"/>
    <property type="evidence" value="ECO:0007669"/>
    <property type="project" value="TreeGrafter"/>
</dbReference>
<dbReference type="GO" id="GO:0003735">
    <property type="term" value="F:structural constituent of ribosome"/>
    <property type="evidence" value="ECO:0007669"/>
    <property type="project" value="InterPro"/>
</dbReference>
<dbReference type="GO" id="GO:0006412">
    <property type="term" value="P:translation"/>
    <property type="evidence" value="ECO:0007669"/>
    <property type="project" value="UniProtKB-UniRule"/>
</dbReference>
<dbReference type="CDD" id="cd00432">
    <property type="entry name" value="Ribosomal_L18_L5e"/>
    <property type="match status" value="1"/>
</dbReference>
<dbReference type="FunFam" id="3.30.420.100:FF:000001">
    <property type="entry name" value="50S ribosomal protein L18"/>
    <property type="match status" value="1"/>
</dbReference>
<dbReference type="Gene3D" id="3.30.420.100">
    <property type="match status" value="1"/>
</dbReference>
<dbReference type="HAMAP" id="MF_01337_B">
    <property type="entry name" value="Ribosomal_uL18_B"/>
    <property type="match status" value="1"/>
</dbReference>
<dbReference type="InterPro" id="IPR004389">
    <property type="entry name" value="Ribosomal_uL18_bac-type"/>
</dbReference>
<dbReference type="InterPro" id="IPR005484">
    <property type="entry name" value="Ribosomal_uL18_bac/euk"/>
</dbReference>
<dbReference type="NCBIfam" id="TIGR00060">
    <property type="entry name" value="L18_bact"/>
    <property type="match status" value="1"/>
</dbReference>
<dbReference type="PANTHER" id="PTHR12899">
    <property type="entry name" value="39S RIBOSOMAL PROTEIN L18, MITOCHONDRIAL"/>
    <property type="match status" value="1"/>
</dbReference>
<dbReference type="PANTHER" id="PTHR12899:SF3">
    <property type="entry name" value="LARGE RIBOSOMAL SUBUNIT PROTEIN UL18M"/>
    <property type="match status" value="1"/>
</dbReference>
<dbReference type="Pfam" id="PF00861">
    <property type="entry name" value="Ribosomal_L18p"/>
    <property type="match status" value="1"/>
</dbReference>
<dbReference type="SUPFAM" id="SSF53137">
    <property type="entry name" value="Translational machinery components"/>
    <property type="match status" value="1"/>
</dbReference>